<gene>
    <name type="primary">khdrbs2</name>
    <name type="ORF">zgc:153588</name>
</gene>
<accession>Q08BJ2</accession>
<comment type="function">
    <text evidence="1">RNA-binding protein that plays a role in the regulation of alternative splicing.</text>
</comment>
<comment type="subcellular location">
    <subcellularLocation>
        <location evidence="1">Nucleus</location>
    </subcellularLocation>
</comment>
<comment type="similarity">
    <text evidence="4">Belongs to the KHDRBS family.</text>
</comment>
<protein>
    <recommendedName>
        <fullName>KH domain-containing, RNA-binding, signal transduction-associated protein 2</fullName>
    </recommendedName>
</protein>
<feature type="chain" id="PRO_0000308956" description="KH domain-containing, RNA-binding, signal transduction-associated protein 2">
    <location>
        <begin position="1"/>
        <end position="346"/>
    </location>
</feature>
<feature type="domain" description="KH" evidence="2">
    <location>
        <begin position="65"/>
        <end position="131"/>
    </location>
</feature>
<feature type="region of interest" description="Disordered" evidence="3">
    <location>
        <begin position="175"/>
        <end position="291"/>
    </location>
</feature>
<feature type="compositionally biased region" description="Low complexity" evidence="3">
    <location>
        <begin position="195"/>
        <end position="224"/>
    </location>
</feature>
<feature type="compositionally biased region" description="Acidic residues" evidence="3">
    <location>
        <begin position="268"/>
        <end position="287"/>
    </location>
</feature>
<proteinExistence type="evidence at transcript level"/>
<keyword id="KW-0507">mRNA processing</keyword>
<keyword id="KW-0539">Nucleus</keyword>
<keyword id="KW-1185">Reference proteome</keyword>
<keyword id="KW-0694">RNA-binding</keyword>
<keyword id="KW-0804">Transcription</keyword>
<keyword id="KW-0805">Transcription regulation</keyword>
<reference key="1">
    <citation type="submission" date="2006-10" db="EMBL/GenBank/DDBJ databases">
        <authorList>
            <consortium name="NIH - Zebrafish Gene Collection (ZGC) project"/>
        </authorList>
    </citation>
    <scope>NUCLEOTIDE SEQUENCE [LARGE SCALE MRNA]</scope>
    <source>
        <tissue>Larva</tissue>
    </source>
</reference>
<name>KHDR2_DANRE</name>
<dbReference type="EMBL" id="BC124701">
    <property type="protein sequence ID" value="AAI24702.1"/>
    <property type="molecule type" value="mRNA"/>
</dbReference>
<dbReference type="RefSeq" id="NP_001070758.1">
    <property type="nucleotide sequence ID" value="NM_001077290.1"/>
</dbReference>
<dbReference type="SMR" id="Q08BJ2"/>
<dbReference type="FunCoup" id="Q08BJ2">
    <property type="interactions" value="310"/>
</dbReference>
<dbReference type="STRING" id="7955.ENSDARP00000091908"/>
<dbReference type="PaxDb" id="7955-ENSDARP00000091908"/>
<dbReference type="Ensembl" id="ENSDART00000101134">
    <property type="protein sequence ID" value="ENSDARP00000091908"/>
    <property type="gene ID" value="ENSDARG00000069469"/>
</dbReference>
<dbReference type="GeneID" id="768147"/>
<dbReference type="KEGG" id="dre:768147"/>
<dbReference type="AGR" id="ZFIN:ZDB-GENE-061013-497"/>
<dbReference type="CTD" id="202559"/>
<dbReference type="ZFIN" id="ZDB-GENE-061013-497">
    <property type="gene designation" value="khdrbs2"/>
</dbReference>
<dbReference type="eggNOG" id="KOG1588">
    <property type="taxonomic scope" value="Eukaryota"/>
</dbReference>
<dbReference type="HOGENOM" id="CLU_034976_0_0_1"/>
<dbReference type="InParanoid" id="Q08BJ2"/>
<dbReference type="OMA" id="YGHGVNE"/>
<dbReference type="OrthoDB" id="6777263at2759"/>
<dbReference type="PhylomeDB" id="Q08BJ2"/>
<dbReference type="TreeFam" id="TF314878"/>
<dbReference type="Reactome" id="R-DRE-8849468">
    <property type="pathway name" value="PTK6 Regulates Proteins Involved in RNA Processing"/>
</dbReference>
<dbReference type="PRO" id="PR:Q08BJ2"/>
<dbReference type="Proteomes" id="UP000000437">
    <property type="component" value="Chromosome 13"/>
</dbReference>
<dbReference type="Bgee" id="ENSDARG00000069469">
    <property type="expression patterns" value="Expressed in brain and 24 other cell types or tissues"/>
</dbReference>
<dbReference type="GO" id="GO:0005634">
    <property type="term" value="C:nucleus"/>
    <property type="evidence" value="ECO:0000318"/>
    <property type="project" value="GO_Central"/>
</dbReference>
<dbReference type="GO" id="GO:0003729">
    <property type="term" value="F:mRNA binding"/>
    <property type="evidence" value="ECO:0000318"/>
    <property type="project" value="GO_Central"/>
</dbReference>
<dbReference type="GO" id="GO:0008143">
    <property type="term" value="F:poly(A) binding"/>
    <property type="evidence" value="ECO:0000318"/>
    <property type="project" value="GO_Central"/>
</dbReference>
<dbReference type="GO" id="GO:0006397">
    <property type="term" value="P:mRNA processing"/>
    <property type="evidence" value="ECO:0007669"/>
    <property type="project" value="UniProtKB-KW"/>
</dbReference>
<dbReference type="GO" id="GO:0000381">
    <property type="term" value="P:regulation of alternative mRNA splicing, via spliceosome"/>
    <property type="evidence" value="ECO:0000318"/>
    <property type="project" value="GO_Central"/>
</dbReference>
<dbReference type="CDD" id="cd22469">
    <property type="entry name" value="KH-I_KHDRBS2"/>
    <property type="match status" value="1"/>
</dbReference>
<dbReference type="FunFam" id="3.30.1370.10:FF:000030">
    <property type="entry name" value="KH domain-containing, RNA-binding, signal transduction-associated protein 3 isoformX2"/>
    <property type="match status" value="1"/>
</dbReference>
<dbReference type="Gene3D" id="3.30.1370.10">
    <property type="entry name" value="K Homology domain, type 1"/>
    <property type="match status" value="1"/>
</dbReference>
<dbReference type="InterPro" id="IPR045071">
    <property type="entry name" value="BBP-like"/>
</dbReference>
<dbReference type="InterPro" id="IPR055256">
    <property type="entry name" value="KH_1_KHDC4/BBP-like"/>
</dbReference>
<dbReference type="InterPro" id="IPR004087">
    <property type="entry name" value="KH_dom"/>
</dbReference>
<dbReference type="InterPro" id="IPR036612">
    <property type="entry name" value="KH_dom_type_1_sf"/>
</dbReference>
<dbReference type="InterPro" id="IPR032571">
    <property type="entry name" value="Qua1_dom"/>
</dbReference>
<dbReference type="InterPro" id="IPR032335">
    <property type="entry name" value="Sam68-YY"/>
</dbReference>
<dbReference type="PANTHER" id="PTHR11208:SF34">
    <property type="entry name" value="KH DOMAIN-CONTAINING, RNA-BINDING, SIGNAL TRANSDUCTION-ASSOCIATED PROTEIN 2"/>
    <property type="match status" value="1"/>
</dbReference>
<dbReference type="PANTHER" id="PTHR11208">
    <property type="entry name" value="RNA-BINDING PROTEIN RELATED"/>
    <property type="match status" value="1"/>
</dbReference>
<dbReference type="Pfam" id="PF22675">
    <property type="entry name" value="KH-I_KHDC4-BBP"/>
    <property type="match status" value="1"/>
</dbReference>
<dbReference type="Pfam" id="PF16274">
    <property type="entry name" value="Qua1"/>
    <property type="match status" value="1"/>
</dbReference>
<dbReference type="Pfam" id="PF16568">
    <property type="entry name" value="Sam68-YY"/>
    <property type="match status" value="1"/>
</dbReference>
<dbReference type="SMART" id="SM00322">
    <property type="entry name" value="KH"/>
    <property type="match status" value="1"/>
</dbReference>
<dbReference type="SUPFAM" id="SSF54791">
    <property type="entry name" value="Eukaryotic type KH-domain (KH-domain type I)"/>
    <property type="match status" value="1"/>
</dbReference>
<dbReference type="PROSITE" id="PS50084">
    <property type="entry name" value="KH_TYPE_1"/>
    <property type="match status" value="1"/>
</dbReference>
<organism>
    <name type="scientific">Danio rerio</name>
    <name type="common">Zebrafish</name>
    <name type="synonym">Brachydanio rerio</name>
    <dbReference type="NCBI Taxonomy" id="7955"/>
    <lineage>
        <taxon>Eukaryota</taxon>
        <taxon>Metazoa</taxon>
        <taxon>Chordata</taxon>
        <taxon>Craniata</taxon>
        <taxon>Vertebrata</taxon>
        <taxon>Euteleostomi</taxon>
        <taxon>Actinopterygii</taxon>
        <taxon>Neopterygii</taxon>
        <taxon>Teleostei</taxon>
        <taxon>Ostariophysi</taxon>
        <taxon>Cypriniformes</taxon>
        <taxon>Danionidae</taxon>
        <taxon>Danioninae</taxon>
        <taxon>Danio</taxon>
    </lineage>
</organism>
<sequence length="346" mass="38829">MDQDKYLPELVAEKESLDASFVHAMRLLAEEIEKFEGDELRKDGEVKKYLDIISNKNIKLSERVLIPVQQYPKFNFVGKLLGPRGNSMKRLQEETGAKMSILGKGSMRDKGKEEELRKSGEAKYAHLSNDLHVLIEVFAPPGEAYSRMSHALEEIKKFLVPDYNDEIRQEQLRELSYLNGSDDPSRGRSARGRGLRLTSTASPRGRGSAAPPAPPGRGAAAPRGTVSSRTSVPTPARGVSAPRTRGTAGTPGYRAPSLQATHKTYEDYGYDDGYDGEYDDQSYESYDDNYSNQSKSVSEYYEYGHGNNDENYNNYEEDWISSRPNLKAPASRLTRGGYRDHPYGRY</sequence>
<evidence type="ECO:0000250" key="1">
    <source>
        <dbReference type="UniProtKB" id="Q9WU01"/>
    </source>
</evidence>
<evidence type="ECO:0000255" key="2">
    <source>
        <dbReference type="PROSITE-ProRule" id="PRU00117"/>
    </source>
</evidence>
<evidence type="ECO:0000256" key="3">
    <source>
        <dbReference type="SAM" id="MobiDB-lite"/>
    </source>
</evidence>
<evidence type="ECO:0000305" key="4"/>